<organism>
    <name type="scientific">Escherichia coli (strain K12)</name>
    <dbReference type="NCBI Taxonomy" id="83333"/>
    <lineage>
        <taxon>Bacteria</taxon>
        <taxon>Pseudomonadati</taxon>
        <taxon>Pseudomonadota</taxon>
        <taxon>Gammaproteobacteria</taxon>
        <taxon>Enterobacterales</taxon>
        <taxon>Enterobacteriaceae</taxon>
        <taxon>Escherichia</taxon>
    </lineage>
</organism>
<dbReference type="EMBL" id="U00096">
    <property type="protein sequence ID" value="AAC74923.1"/>
    <property type="molecule type" value="Genomic_DNA"/>
</dbReference>
<dbReference type="EMBL" id="AP009048">
    <property type="protein sequence ID" value="BAA15661.1"/>
    <property type="molecule type" value="Genomic_DNA"/>
</dbReference>
<dbReference type="EMBL" id="M55005">
    <property type="status" value="NOT_ANNOTATED_CDS"/>
    <property type="molecule type" value="Genomic_DNA"/>
</dbReference>
<dbReference type="EMBL" id="U27210">
    <property type="protein sequence ID" value="AAA68942.1"/>
    <property type="molecule type" value="Genomic_DNA"/>
</dbReference>
<dbReference type="PIR" id="E64947">
    <property type="entry name" value="E64947"/>
</dbReference>
<dbReference type="RefSeq" id="NP_416367.1">
    <property type="nucleotide sequence ID" value="NC_000913.3"/>
</dbReference>
<dbReference type="RefSeq" id="WP_001056706.1">
    <property type="nucleotide sequence ID" value="NZ_SSZK01000001.1"/>
</dbReference>
<dbReference type="SMR" id="P46118"/>
<dbReference type="BioGRID" id="4260935">
    <property type="interactions" value="99"/>
</dbReference>
<dbReference type="DIP" id="DIP-9891N"/>
<dbReference type="FunCoup" id="P46118">
    <property type="interactions" value="70"/>
</dbReference>
<dbReference type="IntAct" id="P46118">
    <property type="interactions" value="2"/>
</dbReference>
<dbReference type="STRING" id="511145.b1853"/>
<dbReference type="jPOST" id="P46118"/>
<dbReference type="PaxDb" id="511145-b1853"/>
<dbReference type="EnsemblBacteria" id="AAC74923">
    <property type="protein sequence ID" value="AAC74923"/>
    <property type="gene ID" value="b1853"/>
</dbReference>
<dbReference type="GeneID" id="93776120"/>
<dbReference type="GeneID" id="946373"/>
<dbReference type="KEGG" id="ecj:JW1842"/>
<dbReference type="KEGG" id="eco:b1853"/>
<dbReference type="KEGG" id="ecoc:C3026_10560"/>
<dbReference type="PATRIC" id="fig|1411691.4.peg.395"/>
<dbReference type="EchoBASE" id="EB2702"/>
<dbReference type="eggNOG" id="COG1737">
    <property type="taxonomic scope" value="Bacteria"/>
</dbReference>
<dbReference type="HOGENOM" id="CLU_055769_0_0_6"/>
<dbReference type="InParanoid" id="P46118"/>
<dbReference type="OMA" id="VPFIHRS"/>
<dbReference type="OrthoDB" id="257751at2"/>
<dbReference type="PhylomeDB" id="P46118"/>
<dbReference type="BioCyc" id="EcoCyc:EG12860-MONOMER"/>
<dbReference type="PRO" id="PR:P46118"/>
<dbReference type="Proteomes" id="UP000000625">
    <property type="component" value="Chromosome"/>
</dbReference>
<dbReference type="GO" id="GO:0097367">
    <property type="term" value="F:carbohydrate derivative binding"/>
    <property type="evidence" value="ECO:0007669"/>
    <property type="project" value="InterPro"/>
</dbReference>
<dbReference type="GO" id="GO:0003677">
    <property type="term" value="F:DNA binding"/>
    <property type="evidence" value="ECO:0007669"/>
    <property type="project" value="UniProtKB-KW"/>
</dbReference>
<dbReference type="GO" id="GO:0003700">
    <property type="term" value="F:DNA-binding transcription factor activity"/>
    <property type="evidence" value="ECO:0000314"/>
    <property type="project" value="EcoCyc"/>
</dbReference>
<dbReference type="GO" id="GO:1901135">
    <property type="term" value="P:carbohydrate derivative metabolic process"/>
    <property type="evidence" value="ECO:0007669"/>
    <property type="project" value="InterPro"/>
</dbReference>
<dbReference type="GO" id="GO:0006974">
    <property type="term" value="P:DNA damage response"/>
    <property type="evidence" value="ECO:0000270"/>
    <property type="project" value="EcoliWiki"/>
</dbReference>
<dbReference type="GO" id="GO:0006355">
    <property type="term" value="P:regulation of DNA-templated transcription"/>
    <property type="evidence" value="ECO:0000318"/>
    <property type="project" value="GO_Central"/>
</dbReference>
<dbReference type="CDD" id="cd05013">
    <property type="entry name" value="SIS_RpiR"/>
    <property type="match status" value="1"/>
</dbReference>
<dbReference type="FunFam" id="1.10.10.10:FF:000060">
    <property type="entry name" value="DNA-binding transcriptional regulator HexR"/>
    <property type="match status" value="1"/>
</dbReference>
<dbReference type="FunFam" id="3.40.50.10490:FF:000009">
    <property type="entry name" value="DNA-binding transcriptional regulator HexR"/>
    <property type="match status" value="1"/>
</dbReference>
<dbReference type="Gene3D" id="3.40.50.10490">
    <property type="entry name" value="Glucose-6-phosphate isomerase like protein, domain 1"/>
    <property type="match status" value="1"/>
</dbReference>
<dbReference type="Gene3D" id="1.10.10.10">
    <property type="entry name" value="Winged helix-like DNA-binding domain superfamily/Winged helix DNA-binding domain"/>
    <property type="match status" value="1"/>
</dbReference>
<dbReference type="InterPro" id="IPR009057">
    <property type="entry name" value="Homeodomain-like_sf"/>
</dbReference>
<dbReference type="InterPro" id="IPR000281">
    <property type="entry name" value="HTH_RpiR"/>
</dbReference>
<dbReference type="InterPro" id="IPR047640">
    <property type="entry name" value="RpiR-like"/>
</dbReference>
<dbReference type="InterPro" id="IPR035472">
    <property type="entry name" value="RpiR-like_SIS"/>
</dbReference>
<dbReference type="InterPro" id="IPR001347">
    <property type="entry name" value="SIS_dom"/>
</dbReference>
<dbReference type="InterPro" id="IPR046348">
    <property type="entry name" value="SIS_dom_sf"/>
</dbReference>
<dbReference type="InterPro" id="IPR036388">
    <property type="entry name" value="WH-like_DNA-bd_sf"/>
</dbReference>
<dbReference type="NCBIfam" id="NF008451">
    <property type="entry name" value="PRK11302.1"/>
    <property type="match status" value="1"/>
</dbReference>
<dbReference type="PANTHER" id="PTHR30514">
    <property type="entry name" value="GLUCOKINASE"/>
    <property type="match status" value="1"/>
</dbReference>
<dbReference type="PANTHER" id="PTHR30514:SF1">
    <property type="entry name" value="HTH-TYPE TRANSCRIPTIONAL REGULATOR HEXR-RELATED"/>
    <property type="match status" value="1"/>
</dbReference>
<dbReference type="Pfam" id="PF01418">
    <property type="entry name" value="HTH_6"/>
    <property type="match status" value="1"/>
</dbReference>
<dbReference type="Pfam" id="PF01380">
    <property type="entry name" value="SIS"/>
    <property type="match status" value="1"/>
</dbReference>
<dbReference type="SUPFAM" id="SSF46689">
    <property type="entry name" value="Homeodomain-like"/>
    <property type="match status" value="1"/>
</dbReference>
<dbReference type="SUPFAM" id="SSF53697">
    <property type="entry name" value="SIS domain"/>
    <property type="match status" value="1"/>
</dbReference>
<dbReference type="PROSITE" id="PS51071">
    <property type="entry name" value="HTH_RPIR"/>
    <property type="match status" value="1"/>
</dbReference>
<dbReference type="PROSITE" id="PS51464">
    <property type="entry name" value="SIS"/>
    <property type="match status" value="1"/>
</dbReference>
<feature type="chain" id="PRO_0000068623" description="HTH-type transcriptional regulator HexR">
    <location>
        <begin position="1"/>
        <end position="289"/>
    </location>
</feature>
<feature type="domain" description="HTH rpiR-type" evidence="2">
    <location>
        <begin position="1"/>
        <end position="77"/>
    </location>
</feature>
<feature type="domain" description="SIS" evidence="3">
    <location>
        <begin position="121"/>
        <end position="260"/>
    </location>
</feature>
<feature type="DNA-binding region" description="H-T-H motif" evidence="2">
    <location>
        <begin position="37"/>
        <end position="56"/>
    </location>
</feature>
<feature type="sequence conflict" description="In Ref. 5; AAA68942." evidence="4" ref="5">
    <original>N</original>
    <variation>Y</variation>
    <location>
        <position position="82"/>
    </location>
</feature>
<keyword id="KW-0238">DNA-binding</keyword>
<keyword id="KW-1185">Reference proteome</keyword>
<keyword id="KW-0678">Repressor</keyword>
<keyword id="KW-0804">Transcription</keyword>
<keyword id="KW-0805">Transcription regulation</keyword>
<comment type="function">
    <text evidence="1">Represses the expression of the hex regulon (zwf, eda, glp and gap).</text>
</comment>
<comment type="sequence caution" evidence="4">
    <conflict type="frameshift">
        <sequence resource="EMBL" id="M55005"/>
    </conflict>
</comment>
<sequence length="289" mass="31976">MNMLEKIQSQLEHLSKSERKVAEVILASPDNAIHSSIAAMALEANVSEPTVNRFCRSMDTRGFPDFKLHLAQSLANGTPYVNRNVNEDDSVESYTGKIFESAMATLDHVRHSLDKSAINRAVDLLTQAKKIAFFGLGSSAAVAHDAMNKFFRFNVPVVYSDDIVLQRMSCMNCSDGDVVVLISHTGRTKNLVELAQLARENDAMVIALTSAGTPLAREATLAITLDVPEDTDIYMPMVSRLAQLTVIDVLATGFTLRRGAKFRDNLKRVKEALKESRFDKQLLNLSDDR</sequence>
<reference key="1">
    <citation type="journal article" date="1996" name="DNA Res.">
        <title>A 460-kb DNA sequence of the Escherichia coli K-12 genome corresponding to the 40.1-50.0 min region on the linkage map.</title>
        <authorList>
            <person name="Itoh T."/>
            <person name="Aiba H."/>
            <person name="Baba T."/>
            <person name="Fujita K."/>
            <person name="Hayashi K."/>
            <person name="Inada T."/>
            <person name="Isono K."/>
            <person name="Kasai H."/>
            <person name="Kimura S."/>
            <person name="Kitakawa M."/>
            <person name="Kitagawa M."/>
            <person name="Makino K."/>
            <person name="Miki T."/>
            <person name="Mizobuchi K."/>
            <person name="Mori H."/>
            <person name="Mori T."/>
            <person name="Motomura K."/>
            <person name="Nakade S."/>
            <person name="Nakamura Y."/>
            <person name="Nashimoto H."/>
            <person name="Nishio Y."/>
            <person name="Oshima T."/>
            <person name="Saito N."/>
            <person name="Sampei G."/>
            <person name="Seki Y."/>
            <person name="Sivasundaram S."/>
            <person name="Tagami H."/>
            <person name="Takeda J."/>
            <person name="Takemoto K."/>
            <person name="Wada C."/>
            <person name="Yamamoto Y."/>
            <person name="Horiuchi T."/>
        </authorList>
    </citation>
    <scope>NUCLEOTIDE SEQUENCE [LARGE SCALE GENOMIC DNA]</scope>
    <source>
        <strain>K12 / W3110 / ATCC 27325 / DSM 5911</strain>
    </source>
</reference>
<reference key="2">
    <citation type="journal article" date="1997" name="Science">
        <title>The complete genome sequence of Escherichia coli K-12.</title>
        <authorList>
            <person name="Blattner F.R."/>
            <person name="Plunkett G. III"/>
            <person name="Bloch C.A."/>
            <person name="Perna N.T."/>
            <person name="Burland V."/>
            <person name="Riley M."/>
            <person name="Collado-Vides J."/>
            <person name="Glasner J.D."/>
            <person name="Rode C.K."/>
            <person name="Mayhew G.F."/>
            <person name="Gregor J."/>
            <person name="Davis N.W."/>
            <person name="Kirkpatrick H.A."/>
            <person name="Goeden M.A."/>
            <person name="Rose D.J."/>
            <person name="Mau B."/>
            <person name="Shao Y."/>
        </authorList>
    </citation>
    <scope>NUCLEOTIDE SEQUENCE [LARGE SCALE GENOMIC DNA]</scope>
    <source>
        <strain>K12 / MG1655 / ATCC 47076</strain>
    </source>
</reference>
<reference key="3">
    <citation type="journal article" date="2006" name="Mol. Syst. Biol.">
        <title>Highly accurate genome sequences of Escherichia coli K-12 strains MG1655 and W3110.</title>
        <authorList>
            <person name="Hayashi K."/>
            <person name="Morooka N."/>
            <person name="Yamamoto Y."/>
            <person name="Fujita K."/>
            <person name="Isono K."/>
            <person name="Choi S."/>
            <person name="Ohtsubo E."/>
            <person name="Baba T."/>
            <person name="Wanner B.L."/>
            <person name="Mori H."/>
            <person name="Horiuchi T."/>
        </authorList>
    </citation>
    <scope>NUCLEOTIDE SEQUENCE [LARGE SCALE GENOMIC DNA]</scope>
    <source>
        <strain>K12 / W3110 / ATCC 27325 / DSM 5911</strain>
    </source>
</reference>
<reference key="4">
    <citation type="journal article" date="1991" name="J. Bacteriol.">
        <title>Molecular characterization of the Escherichia coli K-12 zwf gene encoding glucose 6-phosphate dehydrogenase.</title>
        <authorList>
            <person name="Rowley D.L."/>
            <person name="Wolf R.E. Jr."/>
        </authorList>
    </citation>
    <scope>NUCLEOTIDE SEQUENCE [GENOMIC DNA] OF 1-123</scope>
    <source>
        <strain>K12</strain>
    </source>
</reference>
<reference key="5">
    <citation type="submission" date="1995-05" db="EMBL/GenBank/DDBJ databases">
        <authorList>
            <person name="Estep P."/>
            <person name="O'Keeffe T."/>
            <person name="Robison K."/>
            <person name="Church G.M."/>
        </authorList>
    </citation>
    <scope>NUCLEOTIDE SEQUENCE [GENOMIC DNA] OF 82-289</scope>
    <source>
        <strain>K12 / EMG2</strain>
    </source>
</reference>
<reference key="6">
    <citation type="journal article" date="1995" name="Nucleic Acids Res.">
        <title>Detection of new genes in a bacterial genome using Markov models for three gene classes.</title>
        <authorList>
            <person name="Borodovsky M."/>
            <person name="McIninch J."/>
            <person name="Koonin E.V."/>
            <person name="Rudd K.E."/>
            <person name="Medigue C."/>
            <person name="Danchin A."/>
        </authorList>
    </citation>
    <scope>IDENTIFICATION</scope>
</reference>
<proteinExistence type="inferred from homology"/>
<evidence type="ECO:0000250" key="1"/>
<evidence type="ECO:0000255" key="2">
    <source>
        <dbReference type="PROSITE-ProRule" id="PRU00390"/>
    </source>
</evidence>
<evidence type="ECO:0000255" key="3">
    <source>
        <dbReference type="PROSITE-ProRule" id="PRU00797"/>
    </source>
</evidence>
<evidence type="ECO:0000305" key="4"/>
<accession>P46118</accession>
<accession>P76282</accession>
<protein>
    <recommendedName>
        <fullName>HTH-type transcriptional regulator HexR</fullName>
    </recommendedName>
    <alternativeName>
        <fullName>Hex regulon repressor</fullName>
    </alternativeName>
</protein>
<name>HEXR_ECOLI</name>
<gene>
    <name type="primary">hexR</name>
    <name type="synonym">yebK</name>
    <name type="ordered locus">b1853</name>
    <name type="ordered locus">JW1842</name>
</gene>